<name>CYC2_KITGR</name>
<proteinExistence type="evidence at protein level"/>
<reference key="1">
    <citation type="journal article" date="2001" name="J. Bacteriol.">
        <title>Eubacterial diterpene cyclase genes essential for production of the isoprenoid antibiotic terpentecin.</title>
        <authorList>
            <person name="Dairi T."/>
            <person name="Hamano Y."/>
            <person name="Kuzuyama T."/>
            <person name="Itoh N."/>
            <person name="Furihata K."/>
            <person name="Seto H."/>
        </authorList>
    </citation>
    <scope>NUCLEOTIDE SEQUENCE [GENOMIC DNA]</scope>
    <scope>PATHWAY</scope>
    <scope>DISRUPTION PHENOTYPE</scope>
    <source>
        <strain>MF730-N6</strain>
    </source>
</reference>
<reference key="2">
    <citation type="journal article" date="2002" name="J. Biol. Chem.">
        <title>Functional analysis of eubacterial diterpene cyclases responsible for biosynthesis of a diterpene antibiotic, terpentecin.</title>
        <authorList>
            <person name="Hamano Y."/>
            <person name="Kuzuyama T."/>
            <person name="Itoh N."/>
            <person name="Furihata K."/>
            <person name="Seto H."/>
            <person name="Dairi T."/>
        </authorList>
    </citation>
    <scope>FUNCTION</scope>
    <scope>CATALYTIC ACTIVITY</scope>
    <scope>COFACTOR</scope>
    <scope>BIOPHYSICOCHEMICAL PROPERTIES</scope>
    <scope>PATHWAY</scope>
    <scope>SUBUNIT</scope>
    <source>
        <strain>MF730-N6</strain>
    </source>
</reference>
<keyword id="KW-0045">Antibiotic biosynthesis</keyword>
<keyword id="KW-0456">Lyase</keyword>
<keyword id="KW-0460">Magnesium</keyword>
<keyword id="KW-0479">Metal-binding</keyword>
<accession>Q9AJE3</accession>
<sequence>MPDAIEFEHEGRRNPNSAEAESAYSSIIAALDLQESDYAVISGHSRIVGAAALVYPDADAETLLAASLWTACLIVNDDRWDYVQEDGGRLAPGEWFDGVTEVVDTWRTAGPRLPDPFFELVRTTMSRLDAALGAEAADEIGHEIKRAITAMKWEGVWNEYTKKTSLATYLSFRRGYCTMDVQVVLDKWINGGRSFAALRDDPVRRAIDDVVVRFGCLSNDYYSWGREKKAVDKSNAVRILMDHAGYDESTALAHVRDDCVQAITDLDCIEESIKRSGHLGSHAQELLDYLACHRPLIYAAATWPTETNRYR</sequence>
<protein>
    <recommendedName>
        <fullName>Terpentetriene synthase</fullName>
        <ecNumber>4.2.3.36</ecNumber>
    </recommendedName>
</protein>
<comment type="function">
    <text evidence="2">Involved in the production of the isoprenoid antibiotic terpentecin. Converts terpentedienol diphosphate (TDP) into terpentetriene (TTE). Can also accept geranylgeranyl diphosphate (GGDP) and farnesyl diphosphate (FDP) as substrates.</text>
</comment>
<comment type="catalytic activity">
    <reaction evidence="2">
        <text>terpentedienyl diphosphate = terpentetriene + diphosphate</text>
        <dbReference type="Rhea" id="RHEA:25617"/>
        <dbReference type="ChEBI" id="CHEBI:33019"/>
        <dbReference type="ChEBI" id="CHEBI:50302"/>
        <dbReference type="ChEBI" id="CHEBI:58821"/>
        <dbReference type="EC" id="4.2.3.36"/>
    </reaction>
</comment>
<comment type="cofactor">
    <cofactor evidence="2">
        <name>Mg(2+)</name>
        <dbReference type="ChEBI" id="CHEBI:18420"/>
    </cofactor>
</comment>
<comment type="biophysicochemical properties">
    <kinetics>
        <KM evidence="2">7.6 uM for TDP</KM>
        <KM evidence="2">7.9 uM for GGDP</KM>
        <KM evidence="2">61.7 uM for FDP</KM>
        <Vmax evidence="2">114.6 nmol/min/mg enzyme with TDP as substrate</Vmax>
        <Vmax evidence="2">8.8 nmol/min/mg enzyme with GGDP as substrate</Vmax>
        <Vmax evidence="2">15.9 nmol/min/mg enzyme with FDP as substrate</Vmax>
    </kinetics>
    <phDependence>
        <text evidence="2">Optimum pH is 6.8.</text>
    </phDependence>
    <temperatureDependence>
        <text evidence="2">Optimum temperature is 50 degrees Celsius.</text>
    </temperatureDependence>
</comment>
<comment type="pathway">
    <text evidence="1 2">Antibiotic biosynthesis.</text>
</comment>
<comment type="subunit">
    <text evidence="2">Homodimer.</text>
</comment>
<comment type="disruption phenotype">
    <text evidence="1">Mutants do not produce terpentecin.</text>
</comment>
<comment type="similarity">
    <text evidence="3">Belongs to the terpene synthase family.</text>
</comment>
<evidence type="ECO:0000269" key="1">
    <source>
    </source>
</evidence>
<evidence type="ECO:0000269" key="2">
    <source>
    </source>
</evidence>
<evidence type="ECO:0000305" key="3"/>
<dbReference type="EC" id="4.2.3.36"/>
<dbReference type="EMBL" id="AB048795">
    <property type="protein sequence ID" value="BAB39207.1"/>
    <property type="molecule type" value="Genomic_DNA"/>
</dbReference>
<dbReference type="RefSeq" id="WP_043911627.1">
    <property type="nucleotide sequence ID" value="NZ_JXZB01000002.1"/>
</dbReference>
<dbReference type="SMR" id="Q9AJE3"/>
<dbReference type="STRING" id="2064.TR51_15705"/>
<dbReference type="KEGG" id="ag:BAB39207"/>
<dbReference type="OrthoDB" id="2989600at2"/>
<dbReference type="BRENDA" id="4.2.3.36">
    <property type="organism ID" value="6030"/>
</dbReference>
<dbReference type="BRENDA" id="4.2.3.B26">
    <property type="organism ID" value="6030"/>
</dbReference>
<dbReference type="BRENDA" id="4.2.3.B27">
    <property type="organism ID" value="6030"/>
</dbReference>
<dbReference type="BRENDA" id="4.2.3.B28">
    <property type="organism ID" value="6030"/>
</dbReference>
<dbReference type="BRENDA" id="4.2.3.B29">
    <property type="organism ID" value="6030"/>
</dbReference>
<dbReference type="GO" id="GO:0046872">
    <property type="term" value="F:metal ion binding"/>
    <property type="evidence" value="ECO:0007669"/>
    <property type="project" value="UniProtKB-KW"/>
</dbReference>
<dbReference type="GO" id="GO:0052679">
    <property type="term" value="F:terpentetriene synthase activity"/>
    <property type="evidence" value="ECO:0000314"/>
    <property type="project" value="UniProtKB"/>
</dbReference>
<dbReference type="GO" id="GO:0017000">
    <property type="term" value="P:antibiotic biosynthetic process"/>
    <property type="evidence" value="ECO:0000314"/>
    <property type="project" value="UniProtKB"/>
</dbReference>
<dbReference type="CDD" id="cd00687">
    <property type="entry name" value="Terpene_cyclase_nonplant_C1"/>
    <property type="match status" value="1"/>
</dbReference>
<dbReference type="FunFam" id="1.10.600.10:FF:000067">
    <property type="entry name" value="Terpentetriene synthase"/>
    <property type="match status" value="1"/>
</dbReference>
<dbReference type="Gene3D" id="1.10.600.10">
    <property type="entry name" value="Farnesyl Diphosphate Synthase"/>
    <property type="match status" value="1"/>
</dbReference>
<dbReference type="InterPro" id="IPR008949">
    <property type="entry name" value="Isoprenoid_synthase_dom_sf"/>
</dbReference>
<dbReference type="Pfam" id="PF19086">
    <property type="entry name" value="Terpene_syn_C_2"/>
    <property type="match status" value="1"/>
</dbReference>
<dbReference type="SUPFAM" id="SSF48576">
    <property type="entry name" value="Terpenoid synthases"/>
    <property type="match status" value="1"/>
</dbReference>
<gene>
    <name type="primary">cyc2</name>
</gene>
<organism>
    <name type="scientific">Kitasatospora griseola</name>
    <name type="common">Streptomyces griseolosporeus</name>
    <dbReference type="NCBI Taxonomy" id="2064"/>
    <lineage>
        <taxon>Bacteria</taxon>
        <taxon>Bacillati</taxon>
        <taxon>Actinomycetota</taxon>
        <taxon>Actinomycetes</taxon>
        <taxon>Kitasatosporales</taxon>
        <taxon>Streptomycetaceae</taxon>
        <taxon>Kitasatospora</taxon>
    </lineage>
</organism>
<feature type="chain" id="PRO_0000418818" description="Terpentetriene synthase">
    <location>
        <begin position="1"/>
        <end position="311"/>
    </location>
</feature>
<feature type="short sequence motif" description="DDXXD motif">
    <location>
        <begin position="77"/>
        <end position="81"/>
    </location>
</feature>